<gene>
    <name evidence="1" type="primary">trpB</name>
    <name type="ordered locus">STER_1549</name>
</gene>
<evidence type="ECO:0000255" key="1">
    <source>
        <dbReference type="HAMAP-Rule" id="MF_00133"/>
    </source>
</evidence>
<sequence length="402" mass="43460">MTYQQPDAKGFYGKFGGQFVPETLMTAVIELDKAYREAKEDSSFQAELDDLLKNYVGRETPLYHAKRLTDHIGGAQIYLKREDLNHTGAHKINNALGQVLLAKRMGKKKIIAETGAGQHGVATATAAALFDMDCTIYMGEEDVKRQALNVFRMELLGAKVFSVTDGSRVLKDAVNAALRAWVAGIDDTHYIMGSALGPAPFPEIVRDFQSVIGREVKRQYAEISGGKLPDAVMACIGGGSNAIGMFYPFVNDKSVAMYGAEASGLGLDTEKHAATFAKGRPGILHGALMDVLQDAHGQIMEAFSISAGLDYPGVGPEHCYFNEIGRATYDSITDEEALEGFKLLSRLEGIIPALESSHAIALAQKVAAKMSPDQSLIVCLSGRGDKDVMQVKERFEAEAEGK</sequence>
<dbReference type="EC" id="4.2.1.20" evidence="1"/>
<dbReference type="EMBL" id="CP000419">
    <property type="protein sequence ID" value="ABJ66701.1"/>
    <property type="molecule type" value="Genomic_DNA"/>
</dbReference>
<dbReference type="RefSeq" id="WP_011681516.1">
    <property type="nucleotide sequence ID" value="NC_008532.1"/>
</dbReference>
<dbReference type="SMR" id="Q03JC1"/>
<dbReference type="KEGG" id="ste:STER_1549"/>
<dbReference type="HOGENOM" id="CLU_016734_3_1_9"/>
<dbReference type="UniPathway" id="UPA00035">
    <property type="reaction ID" value="UER00044"/>
</dbReference>
<dbReference type="GO" id="GO:0005737">
    <property type="term" value="C:cytoplasm"/>
    <property type="evidence" value="ECO:0007669"/>
    <property type="project" value="TreeGrafter"/>
</dbReference>
<dbReference type="GO" id="GO:0004834">
    <property type="term" value="F:tryptophan synthase activity"/>
    <property type="evidence" value="ECO:0007669"/>
    <property type="project" value="UniProtKB-UniRule"/>
</dbReference>
<dbReference type="CDD" id="cd06446">
    <property type="entry name" value="Trp-synth_B"/>
    <property type="match status" value="1"/>
</dbReference>
<dbReference type="FunFam" id="3.40.50.1100:FF:000001">
    <property type="entry name" value="Tryptophan synthase beta chain"/>
    <property type="match status" value="1"/>
</dbReference>
<dbReference type="FunFam" id="3.40.50.1100:FF:000004">
    <property type="entry name" value="Tryptophan synthase beta chain"/>
    <property type="match status" value="1"/>
</dbReference>
<dbReference type="Gene3D" id="3.40.50.1100">
    <property type="match status" value="2"/>
</dbReference>
<dbReference type="HAMAP" id="MF_00133">
    <property type="entry name" value="Trp_synth_beta"/>
    <property type="match status" value="1"/>
</dbReference>
<dbReference type="InterPro" id="IPR006653">
    <property type="entry name" value="Trp_synth_b_CS"/>
</dbReference>
<dbReference type="InterPro" id="IPR006654">
    <property type="entry name" value="Trp_synth_beta"/>
</dbReference>
<dbReference type="InterPro" id="IPR023026">
    <property type="entry name" value="Trp_synth_beta/beta-like"/>
</dbReference>
<dbReference type="InterPro" id="IPR001926">
    <property type="entry name" value="TrpB-like_PALP"/>
</dbReference>
<dbReference type="InterPro" id="IPR036052">
    <property type="entry name" value="TrpB-like_PALP_sf"/>
</dbReference>
<dbReference type="NCBIfam" id="TIGR00263">
    <property type="entry name" value="trpB"/>
    <property type="match status" value="1"/>
</dbReference>
<dbReference type="PANTHER" id="PTHR48077:SF3">
    <property type="entry name" value="TRYPTOPHAN SYNTHASE"/>
    <property type="match status" value="1"/>
</dbReference>
<dbReference type="PANTHER" id="PTHR48077">
    <property type="entry name" value="TRYPTOPHAN SYNTHASE-RELATED"/>
    <property type="match status" value="1"/>
</dbReference>
<dbReference type="Pfam" id="PF00291">
    <property type="entry name" value="PALP"/>
    <property type="match status" value="1"/>
</dbReference>
<dbReference type="PIRSF" id="PIRSF001413">
    <property type="entry name" value="Trp_syn_beta"/>
    <property type="match status" value="1"/>
</dbReference>
<dbReference type="SUPFAM" id="SSF53686">
    <property type="entry name" value="Tryptophan synthase beta subunit-like PLP-dependent enzymes"/>
    <property type="match status" value="1"/>
</dbReference>
<dbReference type="PROSITE" id="PS00168">
    <property type="entry name" value="TRP_SYNTHASE_BETA"/>
    <property type="match status" value="1"/>
</dbReference>
<comment type="function">
    <text evidence="1">The beta subunit is responsible for the synthesis of L-tryptophan from indole and L-serine.</text>
</comment>
<comment type="catalytic activity">
    <reaction evidence="1">
        <text>(1S,2R)-1-C-(indol-3-yl)glycerol 3-phosphate + L-serine = D-glyceraldehyde 3-phosphate + L-tryptophan + H2O</text>
        <dbReference type="Rhea" id="RHEA:10532"/>
        <dbReference type="ChEBI" id="CHEBI:15377"/>
        <dbReference type="ChEBI" id="CHEBI:33384"/>
        <dbReference type="ChEBI" id="CHEBI:57912"/>
        <dbReference type="ChEBI" id="CHEBI:58866"/>
        <dbReference type="ChEBI" id="CHEBI:59776"/>
        <dbReference type="EC" id="4.2.1.20"/>
    </reaction>
</comment>
<comment type="cofactor">
    <cofactor evidence="1">
        <name>pyridoxal 5'-phosphate</name>
        <dbReference type="ChEBI" id="CHEBI:597326"/>
    </cofactor>
</comment>
<comment type="pathway">
    <text evidence="1">Amino-acid biosynthesis; L-tryptophan biosynthesis; L-tryptophan from chorismate: step 5/5.</text>
</comment>
<comment type="subunit">
    <text evidence="1">Tetramer of two alpha and two beta chains.</text>
</comment>
<comment type="similarity">
    <text evidence="1">Belongs to the TrpB family.</text>
</comment>
<reference key="1">
    <citation type="journal article" date="2006" name="Proc. Natl. Acad. Sci. U.S.A.">
        <title>Comparative genomics of the lactic acid bacteria.</title>
        <authorList>
            <person name="Makarova K.S."/>
            <person name="Slesarev A."/>
            <person name="Wolf Y.I."/>
            <person name="Sorokin A."/>
            <person name="Mirkin B."/>
            <person name="Koonin E.V."/>
            <person name="Pavlov A."/>
            <person name="Pavlova N."/>
            <person name="Karamychev V."/>
            <person name="Polouchine N."/>
            <person name="Shakhova V."/>
            <person name="Grigoriev I."/>
            <person name="Lou Y."/>
            <person name="Rohksar D."/>
            <person name="Lucas S."/>
            <person name="Huang K."/>
            <person name="Goodstein D.M."/>
            <person name="Hawkins T."/>
            <person name="Plengvidhya V."/>
            <person name="Welker D."/>
            <person name="Hughes J."/>
            <person name="Goh Y."/>
            <person name="Benson A."/>
            <person name="Baldwin K."/>
            <person name="Lee J.-H."/>
            <person name="Diaz-Muniz I."/>
            <person name="Dosti B."/>
            <person name="Smeianov V."/>
            <person name="Wechter W."/>
            <person name="Barabote R."/>
            <person name="Lorca G."/>
            <person name="Altermann E."/>
            <person name="Barrangou R."/>
            <person name="Ganesan B."/>
            <person name="Xie Y."/>
            <person name="Rawsthorne H."/>
            <person name="Tamir D."/>
            <person name="Parker C."/>
            <person name="Breidt F."/>
            <person name="Broadbent J.R."/>
            <person name="Hutkins R."/>
            <person name="O'Sullivan D."/>
            <person name="Steele J."/>
            <person name="Unlu G."/>
            <person name="Saier M.H. Jr."/>
            <person name="Klaenhammer T."/>
            <person name="Richardson P."/>
            <person name="Kozyavkin S."/>
            <person name="Weimer B.C."/>
            <person name="Mills D.A."/>
        </authorList>
    </citation>
    <scope>NUCLEOTIDE SEQUENCE [LARGE SCALE GENOMIC DNA]</scope>
    <source>
        <strain>ATCC BAA-491 / LMD-9</strain>
    </source>
</reference>
<organism>
    <name type="scientific">Streptococcus thermophilus (strain ATCC BAA-491 / LMD-9)</name>
    <dbReference type="NCBI Taxonomy" id="322159"/>
    <lineage>
        <taxon>Bacteria</taxon>
        <taxon>Bacillati</taxon>
        <taxon>Bacillota</taxon>
        <taxon>Bacilli</taxon>
        <taxon>Lactobacillales</taxon>
        <taxon>Streptococcaceae</taxon>
        <taxon>Streptococcus</taxon>
    </lineage>
</organism>
<proteinExistence type="inferred from homology"/>
<accession>Q03JC1</accession>
<keyword id="KW-0028">Amino-acid biosynthesis</keyword>
<keyword id="KW-0057">Aromatic amino acid biosynthesis</keyword>
<keyword id="KW-0456">Lyase</keyword>
<keyword id="KW-0663">Pyridoxal phosphate</keyword>
<keyword id="KW-0822">Tryptophan biosynthesis</keyword>
<name>TRPB_STRTD</name>
<feature type="chain" id="PRO_1000018412" description="Tryptophan synthase beta chain">
    <location>
        <begin position="1"/>
        <end position="402"/>
    </location>
</feature>
<feature type="modified residue" description="N6-(pyridoxal phosphate)lysine" evidence="1">
    <location>
        <position position="91"/>
    </location>
</feature>
<protein>
    <recommendedName>
        <fullName evidence="1">Tryptophan synthase beta chain</fullName>
        <ecNumber evidence="1">4.2.1.20</ecNumber>
    </recommendedName>
</protein>